<protein>
    <recommendedName>
        <fullName>Probable receptor-like protein kinase At5g24010</fullName>
        <ecNumber>2.7.11.-</ecNumber>
    </recommendedName>
</protein>
<keyword id="KW-0067">ATP-binding</keyword>
<keyword id="KW-0325">Glycoprotein</keyword>
<keyword id="KW-0418">Kinase</keyword>
<keyword id="KW-0472">Membrane</keyword>
<keyword id="KW-0547">Nucleotide-binding</keyword>
<keyword id="KW-1185">Reference proteome</keyword>
<keyword id="KW-0723">Serine/threonine-protein kinase</keyword>
<keyword id="KW-0732">Signal</keyword>
<keyword id="KW-0808">Transferase</keyword>
<keyword id="KW-0812">Transmembrane</keyword>
<keyword id="KW-1133">Transmembrane helix</keyword>
<comment type="subcellular location">
    <subcellularLocation>
        <location evidence="6">Membrane</location>
        <topology evidence="6">Single-pass type I membrane protein</topology>
    </subcellularLocation>
</comment>
<comment type="similarity">
    <text evidence="2">Belongs to the protein kinase superfamily. Ser/Thr protein kinase family.</text>
</comment>
<dbReference type="EC" id="2.7.11.-"/>
<dbReference type="EMBL" id="AB009056">
    <property type="protein sequence ID" value="BAB08724.1"/>
    <property type="molecule type" value="Genomic_DNA"/>
</dbReference>
<dbReference type="EMBL" id="CP002688">
    <property type="protein sequence ID" value="AED93245.1"/>
    <property type="molecule type" value="Genomic_DNA"/>
</dbReference>
<dbReference type="EMBL" id="AY080639">
    <property type="protein sequence ID" value="AAL85985.1"/>
    <property type="molecule type" value="mRNA"/>
</dbReference>
<dbReference type="RefSeq" id="NP_197789.1">
    <property type="nucleotide sequence ID" value="NM_122306.3"/>
</dbReference>
<dbReference type="SMR" id="Q9FLW0"/>
<dbReference type="BioGRID" id="17741">
    <property type="interactions" value="29"/>
</dbReference>
<dbReference type="FunCoup" id="Q9FLW0">
    <property type="interactions" value="190"/>
</dbReference>
<dbReference type="IntAct" id="Q9FLW0">
    <property type="interactions" value="28"/>
</dbReference>
<dbReference type="STRING" id="3702.Q9FLW0"/>
<dbReference type="GlyGen" id="Q9FLW0">
    <property type="glycosylation" value="5 sites"/>
</dbReference>
<dbReference type="iPTMnet" id="Q9FLW0"/>
<dbReference type="PaxDb" id="3702-AT5G24010.1"/>
<dbReference type="ProteomicsDB" id="243132"/>
<dbReference type="EnsemblPlants" id="AT5G24010.1">
    <property type="protein sequence ID" value="AT5G24010.1"/>
    <property type="gene ID" value="AT5G24010"/>
</dbReference>
<dbReference type="GeneID" id="832466"/>
<dbReference type="Gramene" id="AT5G24010.1">
    <property type="protein sequence ID" value="AT5G24010.1"/>
    <property type="gene ID" value="AT5G24010"/>
</dbReference>
<dbReference type="KEGG" id="ath:AT5G24010"/>
<dbReference type="Araport" id="AT5G24010"/>
<dbReference type="TAIR" id="AT5G24010"/>
<dbReference type="eggNOG" id="KOG1187">
    <property type="taxonomic scope" value="Eukaryota"/>
</dbReference>
<dbReference type="HOGENOM" id="CLU_000288_42_1_1"/>
<dbReference type="InParanoid" id="Q9FLW0"/>
<dbReference type="OMA" id="MTAQEMD"/>
<dbReference type="PhylomeDB" id="Q9FLW0"/>
<dbReference type="PRO" id="PR:Q9FLW0"/>
<dbReference type="Proteomes" id="UP000006548">
    <property type="component" value="Chromosome 5"/>
</dbReference>
<dbReference type="ExpressionAtlas" id="Q9FLW0">
    <property type="expression patterns" value="baseline and differential"/>
</dbReference>
<dbReference type="GO" id="GO:0005886">
    <property type="term" value="C:plasma membrane"/>
    <property type="evidence" value="ECO:0007005"/>
    <property type="project" value="TAIR"/>
</dbReference>
<dbReference type="GO" id="GO:0009506">
    <property type="term" value="C:plasmodesma"/>
    <property type="evidence" value="ECO:0007005"/>
    <property type="project" value="TAIR"/>
</dbReference>
<dbReference type="GO" id="GO:0005524">
    <property type="term" value="F:ATP binding"/>
    <property type="evidence" value="ECO:0007669"/>
    <property type="project" value="UniProtKB-KW"/>
</dbReference>
<dbReference type="GO" id="GO:0004674">
    <property type="term" value="F:protein serine/threonine kinase activity"/>
    <property type="evidence" value="ECO:0007669"/>
    <property type="project" value="UniProtKB-KW"/>
</dbReference>
<dbReference type="CDD" id="cd14066">
    <property type="entry name" value="STKc_IRAK"/>
    <property type="match status" value="1"/>
</dbReference>
<dbReference type="FunFam" id="2.60.120.430:FF:000005">
    <property type="entry name" value="Putative receptor-like protein kinase"/>
    <property type="match status" value="1"/>
</dbReference>
<dbReference type="FunFam" id="1.10.510.10:FF:000058">
    <property type="entry name" value="Receptor-like protein kinase FERONIA"/>
    <property type="match status" value="1"/>
</dbReference>
<dbReference type="FunFam" id="2.60.120.430:FF:000001">
    <property type="entry name" value="Receptor-like protein kinase FERONIA"/>
    <property type="match status" value="1"/>
</dbReference>
<dbReference type="FunFam" id="3.30.200.20:FF:000039">
    <property type="entry name" value="receptor-like protein kinase FERONIA"/>
    <property type="match status" value="1"/>
</dbReference>
<dbReference type="Gene3D" id="2.60.120.430">
    <property type="entry name" value="Galactose-binding lectin"/>
    <property type="match status" value="2"/>
</dbReference>
<dbReference type="Gene3D" id="3.30.200.20">
    <property type="entry name" value="Phosphorylase Kinase, domain 1"/>
    <property type="match status" value="1"/>
</dbReference>
<dbReference type="Gene3D" id="1.10.510.10">
    <property type="entry name" value="Transferase(Phosphotransferase) domain 1"/>
    <property type="match status" value="1"/>
</dbReference>
<dbReference type="InterPro" id="IPR011009">
    <property type="entry name" value="Kinase-like_dom_sf"/>
</dbReference>
<dbReference type="InterPro" id="IPR024788">
    <property type="entry name" value="Malectin-like_Carb-bd_dom"/>
</dbReference>
<dbReference type="InterPro" id="IPR000719">
    <property type="entry name" value="Prot_kinase_dom"/>
</dbReference>
<dbReference type="InterPro" id="IPR017441">
    <property type="entry name" value="Protein_kinase_ATP_BS"/>
</dbReference>
<dbReference type="InterPro" id="IPR001245">
    <property type="entry name" value="Ser-Thr/Tyr_kinase_cat_dom"/>
</dbReference>
<dbReference type="InterPro" id="IPR008271">
    <property type="entry name" value="Ser/Thr_kinase_AS"/>
</dbReference>
<dbReference type="PANTHER" id="PTHR47989">
    <property type="entry name" value="OS01G0750732 PROTEIN"/>
    <property type="match status" value="1"/>
</dbReference>
<dbReference type="PANTHER" id="PTHR47989:SF62">
    <property type="entry name" value="OS05G0423500 PROTEIN"/>
    <property type="match status" value="1"/>
</dbReference>
<dbReference type="Pfam" id="PF12819">
    <property type="entry name" value="Malectin_like"/>
    <property type="match status" value="1"/>
</dbReference>
<dbReference type="Pfam" id="PF07714">
    <property type="entry name" value="PK_Tyr_Ser-Thr"/>
    <property type="match status" value="1"/>
</dbReference>
<dbReference type="SMART" id="SM00220">
    <property type="entry name" value="S_TKc"/>
    <property type="match status" value="1"/>
</dbReference>
<dbReference type="SUPFAM" id="SSF56112">
    <property type="entry name" value="Protein kinase-like (PK-like)"/>
    <property type="match status" value="1"/>
</dbReference>
<dbReference type="PROSITE" id="PS00107">
    <property type="entry name" value="PROTEIN_KINASE_ATP"/>
    <property type="match status" value="1"/>
</dbReference>
<dbReference type="PROSITE" id="PS50011">
    <property type="entry name" value="PROTEIN_KINASE_DOM"/>
    <property type="match status" value="1"/>
</dbReference>
<dbReference type="PROSITE" id="PS00108">
    <property type="entry name" value="PROTEIN_KINASE_ST"/>
    <property type="match status" value="1"/>
</dbReference>
<reference key="1">
    <citation type="journal article" date="1998" name="DNA Res.">
        <title>Structural analysis of Arabidopsis thaliana chromosome 5. IV. Sequence features of the regions of 1,456,315 bp covered by nineteen physically assigned P1 and TAC clones.</title>
        <authorList>
            <person name="Sato S."/>
            <person name="Kaneko T."/>
            <person name="Kotani H."/>
            <person name="Nakamura Y."/>
            <person name="Asamizu E."/>
            <person name="Miyajima N."/>
            <person name="Tabata S."/>
        </authorList>
    </citation>
    <scope>NUCLEOTIDE SEQUENCE [LARGE SCALE GENOMIC DNA]</scope>
    <source>
        <strain>cv. Columbia</strain>
    </source>
</reference>
<reference key="2">
    <citation type="journal article" date="2017" name="Plant J.">
        <title>Araport11: a complete reannotation of the Arabidopsis thaliana reference genome.</title>
        <authorList>
            <person name="Cheng C.Y."/>
            <person name="Krishnakumar V."/>
            <person name="Chan A.P."/>
            <person name="Thibaud-Nissen F."/>
            <person name="Schobel S."/>
            <person name="Town C.D."/>
        </authorList>
    </citation>
    <scope>GENOME REANNOTATION</scope>
    <source>
        <strain>cv. Columbia</strain>
    </source>
</reference>
<reference key="3">
    <citation type="journal article" date="2003" name="Science">
        <title>Empirical analysis of transcriptional activity in the Arabidopsis genome.</title>
        <authorList>
            <person name="Yamada K."/>
            <person name="Lim J."/>
            <person name="Dale J.M."/>
            <person name="Chen H."/>
            <person name="Shinn P."/>
            <person name="Palm C.J."/>
            <person name="Southwick A.M."/>
            <person name="Wu H.C."/>
            <person name="Kim C.J."/>
            <person name="Nguyen M."/>
            <person name="Pham P.K."/>
            <person name="Cheuk R.F."/>
            <person name="Karlin-Newmann G."/>
            <person name="Liu S.X."/>
            <person name="Lam B."/>
            <person name="Sakano H."/>
            <person name="Wu T."/>
            <person name="Yu G."/>
            <person name="Miranda M."/>
            <person name="Quach H.L."/>
            <person name="Tripp M."/>
            <person name="Chang C.H."/>
            <person name="Lee J.M."/>
            <person name="Toriumi M.J."/>
            <person name="Chan M.M."/>
            <person name="Tang C.C."/>
            <person name="Onodera C.S."/>
            <person name="Deng J.M."/>
            <person name="Akiyama K."/>
            <person name="Ansari Y."/>
            <person name="Arakawa T."/>
            <person name="Banh J."/>
            <person name="Banno F."/>
            <person name="Bowser L."/>
            <person name="Brooks S.Y."/>
            <person name="Carninci P."/>
            <person name="Chao Q."/>
            <person name="Choy N."/>
            <person name="Enju A."/>
            <person name="Goldsmith A.D."/>
            <person name="Gurjal M."/>
            <person name="Hansen N.F."/>
            <person name="Hayashizaki Y."/>
            <person name="Johnson-Hopson C."/>
            <person name="Hsuan V.W."/>
            <person name="Iida K."/>
            <person name="Karnes M."/>
            <person name="Khan S."/>
            <person name="Koesema E."/>
            <person name="Ishida J."/>
            <person name="Jiang P.X."/>
            <person name="Jones T."/>
            <person name="Kawai J."/>
            <person name="Kamiya A."/>
            <person name="Meyers C."/>
            <person name="Nakajima M."/>
            <person name="Narusaka M."/>
            <person name="Seki M."/>
            <person name="Sakurai T."/>
            <person name="Satou M."/>
            <person name="Tamse R."/>
            <person name="Vaysberg M."/>
            <person name="Wallender E.K."/>
            <person name="Wong C."/>
            <person name="Yamamura Y."/>
            <person name="Yuan S."/>
            <person name="Shinozaki K."/>
            <person name="Davis R.W."/>
            <person name="Theologis A."/>
            <person name="Ecker J.R."/>
        </authorList>
    </citation>
    <scope>NUCLEOTIDE SEQUENCE [LARGE SCALE MRNA] OF 493-824</scope>
    <source>
        <strain>cv. Columbia</strain>
    </source>
</reference>
<reference key="4">
    <citation type="journal article" date="2003" name="Mol. Cell. Proteomics">
        <title>Large-scale analysis of in vivo phosphorylated membrane proteins by immobilized metal ion affinity chromatography and mass spectrometry.</title>
        <authorList>
            <person name="Nuehse T.S."/>
            <person name="Stensballe A."/>
            <person name="Jensen O.N."/>
            <person name="Peck S.C."/>
        </authorList>
    </citation>
    <scope>IDENTIFICATION BY MASS SPECTROMETRY [LARGE SCALE ANALYSIS]</scope>
    <source>
        <strain>cv. La-0</strain>
    </source>
</reference>
<reference key="5">
    <citation type="journal article" date="2004" name="Plant Cell">
        <title>Phosphoproteomics of the Arabidopsis plasma membrane and a new phosphorylation site database.</title>
        <authorList>
            <person name="Nuehse T.S."/>
            <person name="Stensballe A."/>
            <person name="Jensen O.N."/>
            <person name="Peck S.C."/>
        </authorList>
    </citation>
    <scope>IDENTIFICATION BY MASS SPECTROMETRY [LARGE SCALE ANALYSIS]</scope>
</reference>
<reference key="6">
    <citation type="journal article" date="2007" name="Mol. Cell. Proteomics">
        <title>A high content in lipid-modified peripheral proteins and integral receptor kinases features in the arabidopsis plasma membrane proteome.</title>
        <authorList>
            <person name="Marmagne A."/>
            <person name="Ferro M."/>
            <person name="Meinnel T."/>
            <person name="Bruley C."/>
            <person name="Kuhn L."/>
            <person name="Garin J."/>
            <person name="Barbier-Brygoo H."/>
            <person name="Ephritikhine G."/>
        </authorList>
    </citation>
    <scope>IDENTIFICATION BY MASS SPECTROMETRY</scope>
    <scope>SUBCELLULAR LOCATION [LARGE SCALE ANALYSIS]</scope>
</reference>
<reference key="7">
    <citation type="journal article" date="2009" name="Mol. Plant">
        <title>Diverse transcriptional programs associated with environmental stress and hormones in the Arabidopsis receptor-like kinase gene family.</title>
        <authorList>
            <person name="Chae L."/>
            <person name="Sudat S."/>
            <person name="Dudoit S."/>
            <person name="Zhu T."/>
            <person name="Luan S."/>
        </authorList>
    </citation>
    <scope>GENE FAMILY</scope>
</reference>
<gene>
    <name type="ordered locus">At5g24010</name>
    <name type="ORF">MZF18.11</name>
</gene>
<evidence type="ECO:0000255" key="1"/>
<evidence type="ECO:0000255" key="2">
    <source>
        <dbReference type="PROSITE-ProRule" id="PRU00159"/>
    </source>
</evidence>
<evidence type="ECO:0000255" key="3">
    <source>
        <dbReference type="PROSITE-ProRule" id="PRU10027"/>
    </source>
</evidence>
<evidence type="ECO:0000256" key="4">
    <source>
        <dbReference type="SAM" id="MobiDB-lite"/>
    </source>
</evidence>
<evidence type="ECO:0000305" key="5"/>
<evidence type="ECO:0000305" key="6">
    <source>
    </source>
</evidence>
<accession>Q9FLW0</accession>
<accession>Q8RXW4</accession>
<organism>
    <name type="scientific">Arabidopsis thaliana</name>
    <name type="common">Mouse-ear cress</name>
    <dbReference type="NCBI Taxonomy" id="3702"/>
    <lineage>
        <taxon>Eukaryota</taxon>
        <taxon>Viridiplantae</taxon>
        <taxon>Streptophyta</taxon>
        <taxon>Embryophyta</taxon>
        <taxon>Tracheophyta</taxon>
        <taxon>Spermatophyta</taxon>
        <taxon>Magnoliopsida</taxon>
        <taxon>eudicotyledons</taxon>
        <taxon>Gunneridae</taxon>
        <taxon>Pentapetalae</taxon>
        <taxon>rosids</taxon>
        <taxon>malvids</taxon>
        <taxon>Brassicales</taxon>
        <taxon>Brassicaceae</taxon>
        <taxon>Camelineae</taxon>
        <taxon>Arabidopsis</taxon>
    </lineage>
</organism>
<feature type="signal peptide" evidence="1">
    <location>
        <begin position="1"/>
        <end position="24"/>
    </location>
</feature>
<feature type="chain" id="PRO_0000386558" description="Probable receptor-like protein kinase At5g24010">
    <location>
        <begin position="25"/>
        <end position="824"/>
    </location>
</feature>
<feature type="topological domain" description="Extracellular" evidence="1">
    <location>
        <begin position="25"/>
        <end position="406"/>
    </location>
</feature>
<feature type="transmembrane region" description="Helical" evidence="1">
    <location>
        <begin position="407"/>
        <end position="427"/>
    </location>
</feature>
<feature type="topological domain" description="Cytoplasmic" evidence="1">
    <location>
        <begin position="428"/>
        <end position="824"/>
    </location>
</feature>
<feature type="domain" description="Protein kinase" evidence="2">
    <location>
        <begin position="489"/>
        <end position="764"/>
    </location>
</feature>
<feature type="region of interest" description="Disordered" evidence="4">
    <location>
        <begin position="440"/>
        <end position="467"/>
    </location>
</feature>
<feature type="region of interest" description="Disordered" evidence="4">
    <location>
        <begin position="777"/>
        <end position="803"/>
    </location>
</feature>
<feature type="compositionally biased region" description="Polar residues" evidence="4">
    <location>
        <begin position="456"/>
        <end position="467"/>
    </location>
</feature>
<feature type="active site" description="Proton acceptor" evidence="2 3">
    <location>
        <position position="613"/>
    </location>
</feature>
<feature type="binding site" evidence="2">
    <location>
        <begin position="495"/>
        <end position="503"/>
    </location>
    <ligand>
        <name>ATP</name>
        <dbReference type="ChEBI" id="CHEBI:30616"/>
    </ligand>
</feature>
<feature type="binding site" evidence="2">
    <location>
        <position position="517"/>
    </location>
    <ligand>
        <name>ATP</name>
        <dbReference type="ChEBI" id="CHEBI:30616"/>
    </ligand>
</feature>
<feature type="glycosylation site" description="N-linked (GlcNAc...) asparagine" evidence="1">
    <location>
        <position position="6"/>
    </location>
</feature>
<feature type="glycosylation site" description="N-linked (GlcNAc...) asparagine" evidence="1">
    <location>
        <position position="41"/>
    </location>
</feature>
<feature type="glycosylation site" description="N-linked (GlcNAc...) asparagine" evidence="1">
    <location>
        <position position="204"/>
    </location>
</feature>
<feature type="glycosylation site" description="N-linked (GlcNAc...) asparagine" evidence="1">
    <location>
        <position position="227"/>
    </location>
</feature>
<feature type="glycosylation site" description="N-linked (GlcNAc...) asparagine" evidence="1">
    <location>
        <position position="291"/>
    </location>
</feature>
<feature type="sequence conflict" description="In Ref. 3; AAL85985." evidence="5" ref="3">
    <original>C</original>
    <variation>Y</variation>
    <location>
        <position position="640"/>
    </location>
</feature>
<sequence length="824" mass="91823">MAFPINLTQTLLFFFCPLLHLSFAAFTPTDNYLINSGSNTNTSFFTTRSFLSDSSEPGSSFLSTDRSISISDTNPSPDSPVLYNTARVFPVGGSYKFQVTTKGTHFIRLHFAPFKASRFNLRSAKFRVLINGFSVINSFSTSSVVVKEFILKIDDPVLEISFLPFKASGFGFVNAVEVFSAPKDYIMDQGTKLVIPNSAQIFSNLSSQVLETVHRINVGGSKLTPFNDTLWRTWVVDDNYLLLRAAARRAWTTHSPNYQNGGATREIAPDNVYMTAQEMDRDNQELQARFNISWGFQVDEKRVLHLVRLHFCDIVSSSLNQLYFNVFINEYLAFKDVDLSTLTFHVLASPLYIDFVAESDRSGMLRISVGPSDLSNPARVNALLNGVEIMRILSPVSSEVVSGKRNVVWIVVGSVLGGFVFLSLFFLSVLCLCRRKNNKTRSSESTGWTPLRRFRGSSNSRTTERTVSSSGYHTLRISFAELQSGTNNFDRSLVIGVGGFGMVFRGSLKDNTKVAVKRGSPGSRQGLPEFLSEITILSKIRHRHLVSLVGYCEEQSEMILVYEYMDKGPLKSHLYGSTNPPLSWKQRLEVCIGAARGLHYLHTGSSQGIIHRDIKSTNILLDNNYVAKVADFGLSRSGPCIDETHVSTGVKGSFGYLDPEYFRRQQLTDKSDVYSFGVVLFEVLCARPAVDPLLVREQVNLAEWAIEWQRKGMLDQIVDPNIADEIKPCSLKKFAETAEKCCADYGVDRPTIGDVLWNLEHVLQLQESGPLNIPEEDYGDVTDPRTARQGLSNGSNIERDYGDGTSGIISSTQVFSQLMTNAGR</sequence>
<proteinExistence type="evidence at protein level"/>
<name>Y5241_ARATH</name>